<comment type="function">
    <text evidence="1">The RuvA-RuvB-RuvC complex processes Holliday junction (HJ) DNA during genetic recombination and DNA repair, while the RuvA-RuvB complex plays an important role in the rescue of blocked DNA replication forks via replication fork reversal (RFR). RuvA specifically binds to HJ cruciform DNA, conferring on it an open structure. The RuvB hexamer acts as an ATP-dependent pump, pulling dsDNA into and through the RuvAB complex. RuvB forms 2 homohexamers on either side of HJ DNA bound by 1 or 2 RuvA tetramers; 4 subunits per hexamer contact DNA at a time. Coordinated motions by a converter formed by DNA-disengaged RuvB subunits stimulates ATP hydrolysis and nucleotide exchange. Immobilization of the converter enables RuvB to convert the ATP-contained energy into a lever motion, pulling 2 nucleotides of DNA out of the RuvA tetramer per ATP hydrolyzed, thus driving DNA branch migration. The RuvB motors rotate together with the DNA substrate, which together with the progressing nucleotide cycle form the mechanistic basis for DNA recombination by continuous HJ branch migration. Branch migration allows RuvC to scan DNA until it finds its consensus sequence, where it cleaves and resolves cruciform DNA.</text>
</comment>
<comment type="catalytic activity">
    <reaction evidence="1">
        <text>ATP + H2O = ADP + phosphate + H(+)</text>
        <dbReference type="Rhea" id="RHEA:13065"/>
        <dbReference type="ChEBI" id="CHEBI:15377"/>
        <dbReference type="ChEBI" id="CHEBI:15378"/>
        <dbReference type="ChEBI" id="CHEBI:30616"/>
        <dbReference type="ChEBI" id="CHEBI:43474"/>
        <dbReference type="ChEBI" id="CHEBI:456216"/>
    </reaction>
</comment>
<comment type="subunit">
    <text evidence="1">Homohexamer. Forms an RuvA(8)-RuvB(12)-Holliday junction (HJ) complex. HJ DNA is sandwiched between 2 RuvA tetramers; dsDNA enters through RuvA and exits via RuvB. An RuvB hexamer assembles on each DNA strand where it exits the tetramer. Each RuvB hexamer is contacted by two RuvA subunits (via domain III) on 2 adjacent RuvB subunits; this complex drives branch migration. In the full resolvosome a probable DNA-RuvA(4)-RuvB(12)-RuvC(2) complex forms which resolves the HJ.</text>
</comment>
<comment type="subcellular location">
    <subcellularLocation>
        <location evidence="1">Cytoplasm</location>
    </subcellularLocation>
</comment>
<comment type="domain">
    <text evidence="1">Has 3 domains, the large (RuvB-L) and small ATPase (RuvB-S) domains and the C-terminal head (RuvB-H) domain. The head domain binds DNA, while the ATPase domains jointly bind ATP, ADP or are empty depending on the state of the subunit in the translocation cycle. During a single DNA translocation step the structure of each domain remains the same, but their relative positions change.</text>
</comment>
<comment type="similarity">
    <text evidence="1">Belongs to the RuvB family.</text>
</comment>
<dbReference type="EC" id="3.6.4.-" evidence="1"/>
<dbReference type="EMBL" id="CP001635">
    <property type="protein sequence ID" value="ACS21262.1"/>
    <property type="molecule type" value="Genomic_DNA"/>
</dbReference>
<dbReference type="SMR" id="C5CM03"/>
<dbReference type="STRING" id="543728.Vapar_4657"/>
<dbReference type="KEGG" id="vap:Vapar_4657"/>
<dbReference type="eggNOG" id="COG2255">
    <property type="taxonomic scope" value="Bacteria"/>
</dbReference>
<dbReference type="HOGENOM" id="CLU_055599_1_0_4"/>
<dbReference type="OrthoDB" id="9804478at2"/>
<dbReference type="GO" id="GO:0005737">
    <property type="term" value="C:cytoplasm"/>
    <property type="evidence" value="ECO:0007669"/>
    <property type="project" value="UniProtKB-SubCell"/>
</dbReference>
<dbReference type="GO" id="GO:0048476">
    <property type="term" value="C:Holliday junction resolvase complex"/>
    <property type="evidence" value="ECO:0007669"/>
    <property type="project" value="UniProtKB-UniRule"/>
</dbReference>
<dbReference type="GO" id="GO:0005524">
    <property type="term" value="F:ATP binding"/>
    <property type="evidence" value="ECO:0007669"/>
    <property type="project" value="UniProtKB-UniRule"/>
</dbReference>
<dbReference type="GO" id="GO:0016887">
    <property type="term" value="F:ATP hydrolysis activity"/>
    <property type="evidence" value="ECO:0007669"/>
    <property type="project" value="InterPro"/>
</dbReference>
<dbReference type="GO" id="GO:0000400">
    <property type="term" value="F:four-way junction DNA binding"/>
    <property type="evidence" value="ECO:0007669"/>
    <property type="project" value="UniProtKB-UniRule"/>
</dbReference>
<dbReference type="GO" id="GO:0009378">
    <property type="term" value="F:four-way junction helicase activity"/>
    <property type="evidence" value="ECO:0007669"/>
    <property type="project" value="InterPro"/>
</dbReference>
<dbReference type="GO" id="GO:0006310">
    <property type="term" value="P:DNA recombination"/>
    <property type="evidence" value="ECO:0007669"/>
    <property type="project" value="UniProtKB-UniRule"/>
</dbReference>
<dbReference type="GO" id="GO:0006281">
    <property type="term" value="P:DNA repair"/>
    <property type="evidence" value="ECO:0007669"/>
    <property type="project" value="UniProtKB-UniRule"/>
</dbReference>
<dbReference type="CDD" id="cd00009">
    <property type="entry name" value="AAA"/>
    <property type="match status" value="1"/>
</dbReference>
<dbReference type="FunFam" id="1.10.10.10:FF:000086">
    <property type="entry name" value="Holliday junction ATP-dependent DNA helicase RuvB"/>
    <property type="match status" value="1"/>
</dbReference>
<dbReference type="FunFam" id="3.40.50.300:FF:000073">
    <property type="entry name" value="Holliday junction ATP-dependent DNA helicase RuvB"/>
    <property type="match status" value="1"/>
</dbReference>
<dbReference type="Gene3D" id="1.10.8.60">
    <property type="match status" value="1"/>
</dbReference>
<dbReference type="Gene3D" id="3.40.50.300">
    <property type="entry name" value="P-loop containing nucleotide triphosphate hydrolases"/>
    <property type="match status" value="1"/>
</dbReference>
<dbReference type="Gene3D" id="1.10.10.10">
    <property type="entry name" value="Winged helix-like DNA-binding domain superfamily/Winged helix DNA-binding domain"/>
    <property type="match status" value="1"/>
</dbReference>
<dbReference type="HAMAP" id="MF_00016">
    <property type="entry name" value="DNA_HJ_migration_RuvB"/>
    <property type="match status" value="1"/>
</dbReference>
<dbReference type="InterPro" id="IPR003593">
    <property type="entry name" value="AAA+_ATPase"/>
</dbReference>
<dbReference type="InterPro" id="IPR041445">
    <property type="entry name" value="AAA_lid_4"/>
</dbReference>
<dbReference type="InterPro" id="IPR004605">
    <property type="entry name" value="DNA_helicase_Holl-junc_RuvB"/>
</dbReference>
<dbReference type="InterPro" id="IPR027417">
    <property type="entry name" value="P-loop_NTPase"/>
</dbReference>
<dbReference type="InterPro" id="IPR008824">
    <property type="entry name" value="RuvB-like_N"/>
</dbReference>
<dbReference type="InterPro" id="IPR008823">
    <property type="entry name" value="RuvB_C"/>
</dbReference>
<dbReference type="InterPro" id="IPR036388">
    <property type="entry name" value="WH-like_DNA-bd_sf"/>
</dbReference>
<dbReference type="InterPro" id="IPR036390">
    <property type="entry name" value="WH_DNA-bd_sf"/>
</dbReference>
<dbReference type="NCBIfam" id="NF000868">
    <property type="entry name" value="PRK00080.1"/>
    <property type="match status" value="1"/>
</dbReference>
<dbReference type="NCBIfam" id="TIGR00635">
    <property type="entry name" value="ruvB"/>
    <property type="match status" value="1"/>
</dbReference>
<dbReference type="PANTHER" id="PTHR42848">
    <property type="match status" value="1"/>
</dbReference>
<dbReference type="PANTHER" id="PTHR42848:SF1">
    <property type="entry name" value="HOLLIDAY JUNCTION BRANCH MIGRATION COMPLEX SUBUNIT RUVB"/>
    <property type="match status" value="1"/>
</dbReference>
<dbReference type="Pfam" id="PF17864">
    <property type="entry name" value="AAA_lid_4"/>
    <property type="match status" value="1"/>
</dbReference>
<dbReference type="Pfam" id="PF05491">
    <property type="entry name" value="RuvB_C"/>
    <property type="match status" value="1"/>
</dbReference>
<dbReference type="Pfam" id="PF05496">
    <property type="entry name" value="RuvB_N"/>
    <property type="match status" value="1"/>
</dbReference>
<dbReference type="SMART" id="SM00382">
    <property type="entry name" value="AAA"/>
    <property type="match status" value="1"/>
</dbReference>
<dbReference type="SUPFAM" id="SSF52540">
    <property type="entry name" value="P-loop containing nucleoside triphosphate hydrolases"/>
    <property type="match status" value="1"/>
</dbReference>
<dbReference type="SUPFAM" id="SSF46785">
    <property type="entry name" value="Winged helix' DNA-binding domain"/>
    <property type="match status" value="1"/>
</dbReference>
<organism>
    <name type="scientific">Variovorax paradoxus (strain S110)</name>
    <dbReference type="NCBI Taxonomy" id="543728"/>
    <lineage>
        <taxon>Bacteria</taxon>
        <taxon>Pseudomonadati</taxon>
        <taxon>Pseudomonadota</taxon>
        <taxon>Betaproteobacteria</taxon>
        <taxon>Burkholderiales</taxon>
        <taxon>Comamonadaceae</taxon>
        <taxon>Variovorax</taxon>
    </lineage>
</organism>
<proteinExistence type="inferred from homology"/>
<keyword id="KW-0067">ATP-binding</keyword>
<keyword id="KW-0963">Cytoplasm</keyword>
<keyword id="KW-0227">DNA damage</keyword>
<keyword id="KW-0233">DNA recombination</keyword>
<keyword id="KW-0234">DNA repair</keyword>
<keyword id="KW-0238">DNA-binding</keyword>
<keyword id="KW-0378">Hydrolase</keyword>
<keyword id="KW-0547">Nucleotide-binding</keyword>
<reference key="1">
    <citation type="journal article" date="2011" name="J. Bacteriol.">
        <title>Complete genome sequence of the metabolically versatile plant growth-promoting endophyte, Variovorax paradoxus S110.</title>
        <authorList>
            <person name="Han J.I."/>
            <person name="Choi H.K."/>
            <person name="Lee S.W."/>
            <person name="Orwin P.M."/>
            <person name="Kim J."/>
            <person name="Laroe S.L."/>
            <person name="Kim T.G."/>
            <person name="O'Neil J."/>
            <person name="Leadbetter J.R."/>
            <person name="Lee S.Y."/>
            <person name="Hur C.G."/>
            <person name="Spain J.C."/>
            <person name="Ovchinnikova G."/>
            <person name="Goodwin L."/>
            <person name="Han C."/>
        </authorList>
    </citation>
    <scope>NUCLEOTIDE SEQUENCE [LARGE SCALE GENOMIC DNA]</scope>
    <source>
        <strain>S110</strain>
    </source>
</reference>
<name>RUVB_VARPS</name>
<evidence type="ECO:0000255" key="1">
    <source>
        <dbReference type="HAMAP-Rule" id="MF_00016"/>
    </source>
</evidence>
<evidence type="ECO:0000256" key="2">
    <source>
        <dbReference type="SAM" id="MobiDB-lite"/>
    </source>
</evidence>
<sequence length="354" mass="38968">MTIQTDDFAPAPPRVVSAAPASPQEEAIERALRPKLLDEYVGQAKVREQLEIFIGAARKRKEALDHVLLFGPPGLGKTTLSHIIAAELGVNLRQTSGPVLEKPKDLAALLTNLEPNDVLFIDEIHRLSPVVEEILYPALEDYQIDIMIGEGPAARSIKLDLQPFTLVGATTRAGMLTNPLRDRFGIVARLEFYTPEELALIVRRSAGLLKVDTDAAGGFEIARRSRGTPRIANRLLRRVRDYAEVKGNGRITEDIAHKALVMLDVDPQGFDLMDRKLLEAVIHRFDGGPVGLDNVAASIGEERDTIEDVIEPYLIQQGYLQRTPRGRIATLAAYRHLGVTPPSSRSDGQDLFGI</sequence>
<gene>
    <name evidence="1" type="primary">ruvB</name>
    <name type="ordered locus">Vapar_4657</name>
</gene>
<accession>C5CM03</accession>
<feature type="chain" id="PRO_1000201851" description="Holliday junction branch migration complex subunit RuvB">
    <location>
        <begin position="1"/>
        <end position="354"/>
    </location>
</feature>
<feature type="region of interest" description="Disordered" evidence="2">
    <location>
        <begin position="1"/>
        <end position="22"/>
    </location>
</feature>
<feature type="region of interest" description="Large ATPase domain (RuvB-L)" evidence="1">
    <location>
        <begin position="5"/>
        <end position="193"/>
    </location>
</feature>
<feature type="region of interest" description="Small ATPAse domain (RuvB-S)" evidence="1">
    <location>
        <begin position="194"/>
        <end position="264"/>
    </location>
</feature>
<feature type="region of interest" description="Head domain (RuvB-H)" evidence="1">
    <location>
        <begin position="267"/>
        <end position="354"/>
    </location>
</feature>
<feature type="binding site" evidence="1">
    <location>
        <position position="32"/>
    </location>
    <ligand>
        <name>ATP</name>
        <dbReference type="ChEBI" id="CHEBI:30616"/>
    </ligand>
</feature>
<feature type="binding site" evidence="1">
    <location>
        <position position="33"/>
    </location>
    <ligand>
        <name>ATP</name>
        <dbReference type="ChEBI" id="CHEBI:30616"/>
    </ligand>
</feature>
<feature type="binding site" evidence="1">
    <location>
        <position position="74"/>
    </location>
    <ligand>
        <name>ATP</name>
        <dbReference type="ChEBI" id="CHEBI:30616"/>
    </ligand>
</feature>
<feature type="binding site" evidence="1">
    <location>
        <position position="77"/>
    </location>
    <ligand>
        <name>ATP</name>
        <dbReference type="ChEBI" id="CHEBI:30616"/>
    </ligand>
</feature>
<feature type="binding site" evidence="1">
    <location>
        <position position="78"/>
    </location>
    <ligand>
        <name>ATP</name>
        <dbReference type="ChEBI" id="CHEBI:30616"/>
    </ligand>
</feature>
<feature type="binding site" evidence="1">
    <location>
        <position position="78"/>
    </location>
    <ligand>
        <name>Mg(2+)</name>
        <dbReference type="ChEBI" id="CHEBI:18420"/>
    </ligand>
</feature>
<feature type="binding site" evidence="1">
    <location>
        <position position="79"/>
    </location>
    <ligand>
        <name>ATP</name>
        <dbReference type="ChEBI" id="CHEBI:30616"/>
    </ligand>
</feature>
<feature type="binding site" evidence="1">
    <location>
        <begin position="140"/>
        <end position="142"/>
    </location>
    <ligand>
        <name>ATP</name>
        <dbReference type="ChEBI" id="CHEBI:30616"/>
    </ligand>
</feature>
<feature type="binding site" evidence="1">
    <location>
        <position position="183"/>
    </location>
    <ligand>
        <name>ATP</name>
        <dbReference type="ChEBI" id="CHEBI:30616"/>
    </ligand>
</feature>
<feature type="binding site" evidence="1">
    <location>
        <position position="193"/>
    </location>
    <ligand>
        <name>ATP</name>
        <dbReference type="ChEBI" id="CHEBI:30616"/>
    </ligand>
</feature>
<feature type="binding site" evidence="1">
    <location>
        <position position="230"/>
    </location>
    <ligand>
        <name>ATP</name>
        <dbReference type="ChEBI" id="CHEBI:30616"/>
    </ligand>
</feature>
<feature type="binding site" evidence="1">
    <location>
        <position position="303"/>
    </location>
    <ligand>
        <name>DNA</name>
        <dbReference type="ChEBI" id="CHEBI:16991"/>
    </ligand>
</feature>
<feature type="binding site" evidence="1">
    <location>
        <position position="322"/>
    </location>
    <ligand>
        <name>DNA</name>
        <dbReference type="ChEBI" id="CHEBI:16991"/>
    </ligand>
</feature>
<feature type="binding site" evidence="1">
    <location>
        <position position="327"/>
    </location>
    <ligand>
        <name>DNA</name>
        <dbReference type="ChEBI" id="CHEBI:16991"/>
    </ligand>
</feature>
<protein>
    <recommendedName>
        <fullName evidence="1">Holliday junction branch migration complex subunit RuvB</fullName>
        <ecNumber evidence="1">3.6.4.-</ecNumber>
    </recommendedName>
</protein>